<evidence type="ECO:0000255" key="1">
    <source>
        <dbReference type="HAMAP-Rule" id="MF_00186"/>
    </source>
</evidence>
<name>GLPK_STAAR</name>
<organism>
    <name type="scientific">Staphylococcus aureus (strain MRSA252)</name>
    <dbReference type="NCBI Taxonomy" id="282458"/>
    <lineage>
        <taxon>Bacteria</taxon>
        <taxon>Bacillati</taxon>
        <taxon>Bacillota</taxon>
        <taxon>Bacilli</taxon>
        <taxon>Bacillales</taxon>
        <taxon>Staphylococcaceae</taxon>
        <taxon>Staphylococcus</taxon>
    </lineage>
</organism>
<comment type="function">
    <text evidence="1">Key enzyme in the regulation of glycerol uptake and metabolism. Catalyzes the phosphorylation of glycerol to yield sn-glycerol 3-phosphate.</text>
</comment>
<comment type="catalytic activity">
    <reaction evidence="1">
        <text>glycerol + ATP = sn-glycerol 3-phosphate + ADP + H(+)</text>
        <dbReference type="Rhea" id="RHEA:21644"/>
        <dbReference type="ChEBI" id="CHEBI:15378"/>
        <dbReference type="ChEBI" id="CHEBI:17754"/>
        <dbReference type="ChEBI" id="CHEBI:30616"/>
        <dbReference type="ChEBI" id="CHEBI:57597"/>
        <dbReference type="ChEBI" id="CHEBI:456216"/>
        <dbReference type="EC" id="2.7.1.30"/>
    </reaction>
</comment>
<comment type="activity regulation">
    <text evidence="1">Activated by phosphorylation and inhibited by fructose 1,6-bisphosphate (FBP).</text>
</comment>
<comment type="pathway">
    <text evidence="1">Polyol metabolism; glycerol degradation via glycerol kinase pathway; sn-glycerol 3-phosphate from glycerol: step 1/1.</text>
</comment>
<comment type="subunit">
    <text evidence="1">Homotetramer and homodimer (in equilibrium).</text>
</comment>
<comment type="PTM">
    <text evidence="1">The phosphoenolpyruvate-dependent sugar phosphotransferase system (PTS), including enzyme I, and histidine-containing protein (HPr) are required for the phosphorylation, which leads to the activation of the enzyme.</text>
</comment>
<comment type="similarity">
    <text evidence="1">Belongs to the FGGY kinase family.</text>
</comment>
<dbReference type="EC" id="2.7.1.30" evidence="1"/>
<dbReference type="EMBL" id="BX571856">
    <property type="protein sequence ID" value="CAG40278.1"/>
    <property type="molecule type" value="Genomic_DNA"/>
</dbReference>
<dbReference type="RefSeq" id="WP_000417379.1">
    <property type="nucleotide sequence ID" value="NC_002952.2"/>
</dbReference>
<dbReference type="SMR" id="Q6GHD5"/>
<dbReference type="KEGG" id="sar:SAR1275"/>
<dbReference type="HOGENOM" id="CLU_009281_2_3_9"/>
<dbReference type="UniPathway" id="UPA00618">
    <property type="reaction ID" value="UER00672"/>
</dbReference>
<dbReference type="Proteomes" id="UP000000596">
    <property type="component" value="Chromosome"/>
</dbReference>
<dbReference type="GO" id="GO:0005829">
    <property type="term" value="C:cytosol"/>
    <property type="evidence" value="ECO:0007669"/>
    <property type="project" value="TreeGrafter"/>
</dbReference>
<dbReference type="GO" id="GO:0005524">
    <property type="term" value="F:ATP binding"/>
    <property type="evidence" value="ECO:0007669"/>
    <property type="project" value="UniProtKB-UniRule"/>
</dbReference>
<dbReference type="GO" id="GO:0004370">
    <property type="term" value="F:glycerol kinase activity"/>
    <property type="evidence" value="ECO:0000250"/>
    <property type="project" value="UniProtKB"/>
</dbReference>
<dbReference type="GO" id="GO:0019563">
    <property type="term" value="P:glycerol catabolic process"/>
    <property type="evidence" value="ECO:0007669"/>
    <property type="project" value="UniProtKB-UniRule"/>
</dbReference>
<dbReference type="GO" id="GO:0006071">
    <property type="term" value="P:glycerol metabolic process"/>
    <property type="evidence" value="ECO:0000250"/>
    <property type="project" value="UniProtKB"/>
</dbReference>
<dbReference type="GO" id="GO:0006072">
    <property type="term" value="P:glycerol-3-phosphate metabolic process"/>
    <property type="evidence" value="ECO:0007669"/>
    <property type="project" value="InterPro"/>
</dbReference>
<dbReference type="CDD" id="cd07786">
    <property type="entry name" value="FGGY_EcGK_like"/>
    <property type="match status" value="1"/>
</dbReference>
<dbReference type="FunFam" id="3.30.420.40:FF:000007">
    <property type="entry name" value="Glycerol kinase"/>
    <property type="match status" value="1"/>
</dbReference>
<dbReference type="FunFam" id="3.30.420.40:FF:000008">
    <property type="entry name" value="Glycerol kinase"/>
    <property type="match status" value="1"/>
</dbReference>
<dbReference type="Gene3D" id="3.30.420.40">
    <property type="match status" value="2"/>
</dbReference>
<dbReference type="HAMAP" id="MF_00186">
    <property type="entry name" value="Glycerol_kin"/>
    <property type="match status" value="1"/>
</dbReference>
<dbReference type="InterPro" id="IPR043129">
    <property type="entry name" value="ATPase_NBD"/>
</dbReference>
<dbReference type="InterPro" id="IPR000577">
    <property type="entry name" value="Carb_kinase_FGGY"/>
</dbReference>
<dbReference type="InterPro" id="IPR018483">
    <property type="entry name" value="Carb_kinase_FGGY_CS"/>
</dbReference>
<dbReference type="InterPro" id="IPR018485">
    <property type="entry name" value="FGGY_C"/>
</dbReference>
<dbReference type="InterPro" id="IPR018484">
    <property type="entry name" value="FGGY_N"/>
</dbReference>
<dbReference type="InterPro" id="IPR005999">
    <property type="entry name" value="Glycerol_kin"/>
</dbReference>
<dbReference type="NCBIfam" id="TIGR01311">
    <property type="entry name" value="glycerol_kin"/>
    <property type="match status" value="1"/>
</dbReference>
<dbReference type="NCBIfam" id="NF000756">
    <property type="entry name" value="PRK00047.1"/>
    <property type="match status" value="1"/>
</dbReference>
<dbReference type="PANTHER" id="PTHR10196:SF69">
    <property type="entry name" value="GLYCEROL KINASE"/>
    <property type="match status" value="1"/>
</dbReference>
<dbReference type="PANTHER" id="PTHR10196">
    <property type="entry name" value="SUGAR KINASE"/>
    <property type="match status" value="1"/>
</dbReference>
<dbReference type="Pfam" id="PF02782">
    <property type="entry name" value="FGGY_C"/>
    <property type="match status" value="1"/>
</dbReference>
<dbReference type="Pfam" id="PF00370">
    <property type="entry name" value="FGGY_N"/>
    <property type="match status" value="1"/>
</dbReference>
<dbReference type="PIRSF" id="PIRSF000538">
    <property type="entry name" value="GlpK"/>
    <property type="match status" value="1"/>
</dbReference>
<dbReference type="SUPFAM" id="SSF53067">
    <property type="entry name" value="Actin-like ATPase domain"/>
    <property type="match status" value="2"/>
</dbReference>
<dbReference type="PROSITE" id="PS00445">
    <property type="entry name" value="FGGY_KINASES_2"/>
    <property type="match status" value="1"/>
</dbReference>
<gene>
    <name evidence="1" type="primary">glpK</name>
    <name type="ordered locus">SAR1275</name>
</gene>
<sequence length="498" mass="55668">MEKYILSIDQGTTSSRAILFNQKGEIAGVAQREFKQYFPQSGWVEHDANEIWTSVLAVMTEVINENDVRADQIAGIGITNQRETTVVWDKHTGRPIYHAIVWQSRQTQSICSELKQQGYEQTFRDKTGLLLDPYFAGTKVKWILDNVEGAREKAENGDLLFGTIDTWLVWKLSGKAAHITDYSNASRTLMFNIHDLEWDDELLELLTVPKNMLPEVKPSSEVYGKTIDYHFYGQEVPIAGVAGDQQAALFGQACFERGDVKNTYGTGGFMLMNTGDKAVKSESGLLTTIAYGIDGKVNYALEGSIFVSGSAIQWLRDGLRMINSAPQSESYATRVDSTEGVYVVPAFVGLGTPYWDSEARGAIFGLTRGTEKEHFIRATLESLCYQTRDVMEAMSKDSGIDVQSLRVDGGAVKNNFIMQFQADIVNTSVERPEIQETTALGAAYLAGLAVGFWESKDDIAKNWKLEEKFDPKMDEGEREKLYRGWKKAVEATQVFKTE</sequence>
<keyword id="KW-0067">ATP-binding</keyword>
<keyword id="KW-0319">Glycerol metabolism</keyword>
<keyword id="KW-0418">Kinase</keyword>
<keyword id="KW-0547">Nucleotide-binding</keyword>
<keyword id="KW-0597">Phosphoprotein</keyword>
<keyword id="KW-0808">Transferase</keyword>
<accession>Q6GHD5</accession>
<protein>
    <recommendedName>
        <fullName evidence="1">Glycerol kinase</fullName>
        <ecNumber evidence="1">2.7.1.30</ecNumber>
    </recommendedName>
    <alternativeName>
        <fullName evidence="1">ATP:glycerol 3-phosphotransferase</fullName>
    </alternativeName>
    <alternativeName>
        <fullName evidence="1">Glycerokinase</fullName>
        <shortName evidence="1">GK</shortName>
    </alternativeName>
</protein>
<reference key="1">
    <citation type="journal article" date="2004" name="Proc. Natl. Acad. Sci. U.S.A.">
        <title>Complete genomes of two clinical Staphylococcus aureus strains: evidence for the rapid evolution of virulence and drug resistance.</title>
        <authorList>
            <person name="Holden M.T.G."/>
            <person name="Feil E.J."/>
            <person name="Lindsay J.A."/>
            <person name="Peacock S.J."/>
            <person name="Day N.P.J."/>
            <person name="Enright M.C."/>
            <person name="Foster T.J."/>
            <person name="Moore C.E."/>
            <person name="Hurst L."/>
            <person name="Atkin R."/>
            <person name="Barron A."/>
            <person name="Bason N."/>
            <person name="Bentley S.D."/>
            <person name="Chillingworth C."/>
            <person name="Chillingworth T."/>
            <person name="Churcher C."/>
            <person name="Clark L."/>
            <person name="Corton C."/>
            <person name="Cronin A."/>
            <person name="Doggett J."/>
            <person name="Dowd L."/>
            <person name="Feltwell T."/>
            <person name="Hance Z."/>
            <person name="Harris B."/>
            <person name="Hauser H."/>
            <person name="Holroyd S."/>
            <person name="Jagels K."/>
            <person name="James K.D."/>
            <person name="Lennard N."/>
            <person name="Line A."/>
            <person name="Mayes R."/>
            <person name="Moule S."/>
            <person name="Mungall K."/>
            <person name="Ormond D."/>
            <person name="Quail M.A."/>
            <person name="Rabbinowitsch E."/>
            <person name="Rutherford K.M."/>
            <person name="Sanders M."/>
            <person name="Sharp S."/>
            <person name="Simmonds M."/>
            <person name="Stevens K."/>
            <person name="Whitehead S."/>
            <person name="Barrell B.G."/>
            <person name="Spratt B.G."/>
            <person name="Parkhill J."/>
        </authorList>
    </citation>
    <scope>NUCLEOTIDE SEQUENCE [LARGE SCALE GENOMIC DNA]</scope>
    <source>
        <strain>MRSA252</strain>
    </source>
</reference>
<proteinExistence type="inferred from homology"/>
<feature type="chain" id="PRO_0000059492" description="Glycerol kinase">
    <location>
        <begin position="1"/>
        <end position="498"/>
    </location>
</feature>
<feature type="binding site" evidence="1">
    <location>
        <position position="12"/>
    </location>
    <ligand>
        <name>ADP</name>
        <dbReference type="ChEBI" id="CHEBI:456216"/>
    </ligand>
</feature>
<feature type="binding site" evidence="1">
    <location>
        <position position="12"/>
    </location>
    <ligand>
        <name>ATP</name>
        <dbReference type="ChEBI" id="CHEBI:30616"/>
    </ligand>
</feature>
<feature type="binding site" evidence="1">
    <location>
        <position position="12"/>
    </location>
    <ligand>
        <name>sn-glycerol 3-phosphate</name>
        <dbReference type="ChEBI" id="CHEBI:57597"/>
    </ligand>
</feature>
<feature type="binding site" evidence="1">
    <location>
        <position position="13"/>
    </location>
    <ligand>
        <name>ATP</name>
        <dbReference type="ChEBI" id="CHEBI:30616"/>
    </ligand>
</feature>
<feature type="binding site" evidence="1">
    <location>
        <position position="14"/>
    </location>
    <ligand>
        <name>ATP</name>
        <dbReference type="ChEBI" id="CHEBI:30616"/>
    </ligand>
</feature>
<feature type="binding site" evidence="1">
    <location>
        <position position="16"/>
    </location>
    <ligand>
        <name>ADP</name>
        <dbReference type="ChEBI" id="CHEBI:456216"/>
    </ligand>
</feature>
<feature type="binding site" evidence="1">
    <location>
        <position position="82"/>
    </location>
    <ligand>
        <name>glycerol</name>
        <dbReference type="ChEBI" id="CHEBI:17754"/>
    </ligand>
</feature>
<feature type="binding site" evidence="1">
    <location>
        <position position="82"/>
    </location>
    <ligand>
        <name>sn-glycerol 3-phosphate</name>
        <dbReference type="ChEBI" id="CHEBI:57597"/>
    </ligand>
</feature>
<feature type="binding site" evidence="1">
    <location>
        <position position="83"/>
    </location>
    <ligand>
        <name>glycerol</name>
        <dbReference type="ChEBI" id="CHEBI:17754"/>
    </ligand>
</feature>
<feature type="binding site" evidence="1">
    <location>
        <position position="83"/>
    </location>
    <ligand>
        <name>sn-glycerol 3-phosphate</name>
        <dbReference type="ChEBI" id="CHEBI:57597"/>
    </ligand>
</feature>
<feature type="binding site" evidence="1">
    <location>
        <position position="134"/>
    </location>
    <ligand>
        <name>glycerol</name>
        <dbReference type="ChEBI" id="CHEBI:17754"/>
    </ligand>
</feature>
<feature type="binding site" evidence="1">
    <location>
        <position position="134"/>
    </location>
    <ligand>
        <name>sn-glycerol 3-phosphate</name>
        <dbReference type="ChEBI" id="CHEBI:57597"/>
    </ligand>
</feature>
<feature type="binding site" evidence="1">
    <location>
        <position position="244"/>
    </location>
    <ligand>
        <name>glycerol</name>
        <dbReference type="ChEBI" id="CHEBI:17754"/>
    </ligand>
</feature>
<feature type="binding site" evidence="1">
    <location>
        <position position="244"/>
    </location>
    <ligand>
        <name>sn-glycerol 3-phosphate</name>
        <dbReference type="ChEBI" id="CHEBI:57597"/>
    </ligand>
</feature>
<feature type="binding site" evidence="1">
    <location>
        <position position="245"/>
    </location>
    <ligand>
        <name>glycerol</name>
        <dbReference type="ChEBI" id="CHEBI:17754"/>
    </ligand>
</feature>
<feature type="binding site" evidence="1">
    <location>
        <position position="266"/>
    </location>
    <ligand>
        <name>ADP</name>
        <dbReference type="ChEBI" id="CHEBI:456216"/>
    </ligand>
</feature>
<feature type="binding site" evidence="1">
    <location>
        <position position="266"/>
    </location>
    <ligand>
        <name>ATP</name>
        <dbReference type="ChEBI" id="CHEBI:30616"/>
    </ligand>
</feature>
<feature type="binding site" evidence="1">
    <location>
        <position position="309"/>
    </location>
    <ligand>
        <name>ADP</name>
        <dbReference type="ChEBI" id="CHEBI:456216"/>
    </ligand>
</feature>
<feature type="binding site" evidence="1">
    <location>
        <position position="309"/>
    </location>
    <ligand>
        <name>ATP</name>
        <dbReference type="ChEBI" id="CHEBI:30616"/>
    </ligand>
</feature>
<feature type="binding site" evidence="1">
    <location>
        <position position="313"/>
    </location>
    <ligand>
        <name>ATP</name>
        <dbReference type="ChEBI" id="CHEBI:30616"/>
    </ligand>
</feature>
<feature type="binding site" evidence="1">
    <location>
        <position position="410"/>
    </location>
    <ligand>
        <name>ADP</name>
        <dbReference type="ChEBI" id="CHEBI:456216"/>
    </ligand>
</feature>
<feature type="binding site" evidence="1">
    <location>
        <position position="410"/>
    </location>
    <ligand>
        <name>ATP</name>
        <dbReference type="ChEBI" id="CHEBI:30616"/>
    </ligand>
</feature>
<feature type="binding site" evidence="1">
    <location>
        <position position="414"/>
    </location>
    <ligand>
        <name>ADP</name>
        <dbReference type="ChEBI" id="CHEBI:456216"/>
    </ligand>
</feature>
<feature type="modified residue" description="Phosphohistidine; by HPr" evidence="1">
    <location>
        <position position="230"/>
    </location>
</feature>